<feature type="chain" id="PRO_1000010359" description="Imidazoleglycerol-phosphate dehydratase">
    <location>
        <begin position="1"/>
        <end position="192"/>
    </location>
</feature>
<name>HIS7_STAS1</name>
<gene>
    <name evidence="1" type="primary">hisB</name>
    <name type="ordered locus">SSP0427</name>
</gene>
<dbReference type="EC" id="4.2.1.19" evidence="1"/>
<dbReference type="EMBL" id="AP008934">
    <property type="protein sequence ID" value="BAE17572.1"/>
    <property type="molecule type" value="Genomic_DNA"/>
</dbReference>
<dbReference type="RefSeq" id="WP_011302395.1">
    <property type="nucleotide sequence ID" value="NZ_MTGA01000036.1"/>
</dbReference>
<dbReference type="SMR" id="Q4A046"/>
<dbReference type="GeneID" id="3616175"/>
<dbReference type="KEGG" id="ssp:SSP0427"/>
<dbReference type="PATRIC" id="fig|342451.11.peg.432"/>
<dbReference type="eggNOG" id="COG0131">
    <property type="taxonomic scope" value="Bacteria"/>
</dbReference>
<dbReference type="HOGENOM" id="CLU_044308_3_0_9"/>
<dbReference type="OrthoDB" id="9790411at2"/>
<dbReference type="UniPathway" id="UPA00031">
    <property type="reaction ID" value="UER00011"/>
</dbReference>
<dbReference type="Proteomes" id="UP000006371">
    <property type="component" value="Chromosome"/>
</dbReference>
<dbReference type="GO" id="GO:0005737">
    <property type="term" value="C:cytoplasm"/>
    <property type="evidence" value="ECO:0007669"/>
    <property type="project" value="UniProtKB-SubCell"/>
</dbReference>
<dbReference type="GO" id="GO:0004424">
    <property type="term" value="F:imidazoleglycerol-phosphate dehydratase activity"/>
    <property type="evidence" value="ECO:0007669"/>
    <property type="project" value="UniProtKB-UniRule"/>
</dbReference>
<dbReference type="GO" id="GO:0000105">
    <property type="term" value="P:L-histidine biosynthetic process"/>
    <property type="evidence" value="ECO:0007669"/>
    <property type="project" value="UniProtKB-UniRule"/>
</dbReference>
<dbReference type="CDD" id="cd07914">
    <property type="entry name" value="IGPD"/>
    <property type="match status" value="1"/>
</dbReference>
<dbReference type="FunFam" id="3.30.230.40:FF:000001">
    <property type="entry name" value="Imidazoleglycerol-phosphate dehydratase HisB"/>
    <property type="match status" value="1"/>
</dbReference>
<dbReference type="FunFam" id="3.30.230.40:FF:000003">
    <property type="entry name" value="Imidazoleglycerol-phosphate dehydratase HisB"/>
    <property type="match status" value="1"/>
</dbReference>
<dbReference type="Gene3D" id="3.30.230.40">
    <property type="entry name" value="Imidazole glycerol phosphate dehydratase, domain 1"/>
    <property type="match status" value="2"/>
</dbReference>
<dbReference type="HAMAP" id="MF_00076">
    <property type="entry name" value="HisB"/>
    <property type="match status" value="1"/>
</dbReference>
<dbReference type="InterPro" id="IPR038494">
    <property type="entry name" value="IGPD_sf"/>
</dbReference>
<dbReference type="InterPro" id="IPR000807">
    <property type="entry name" value="ImidazoleglycerolP_deHydtase"/>
</dbReference>
<dbReference type="InterPro" id="IPR020565">
    <property type="entry name" value="ImidazoleglycerP_deHydtase_CS"/>
</dbReference>
<dbReference type="InterPro" id="IPR020568">
    <property type="entry name" value="Ribosomal_Su5_D2-typ_SF"/>
</dbReference>
<dbReference type="NCBIfam" id="NF002107">
    <property type="entry name" value="PRK00951.1-2"/>
    <property type="match status" value="1"/>
</dbReference>
<dbReference type="NCBIfam" id="NF002111">
    <property type="entry name" value="PRK00951.2-1"/>
    <property type="match status" value="1"/>
</dbReference>
<dbReference type="NCBIfam" id="NF002114">
    <property type="entry name" value="PRK00951.2-4"/>
    <property type="match status" value="1"/>
</dbReference>
<dbReference type="PANTHER" id="PTHR23133:SF2">
    <property type="entry name" value="IMIDAZOLEGLYCEROL-PHOSPHATE DEHYDRATASE"/>
    <property type="match status" value="1"/>
</dbReference>
<dbReference type="PANTHER" id="PTHR23133">
    <property type="entry name" value="IMIDAZOLEGLYCEROL-PHOSPHATE DEHYDRATASE HIS7"/>
    <property type="match status" value="1"/>
</dbReference>
<dbReference type="Pfam" id="PF00475">
    <property type="entry name" value="IGPD"/>
    <property type="match status" value="1"/>
</dbReference>
<dbReference type="SUPFAM" id="SSF54211">
    <property type="entry name" value="Ribosomal protein S5 domain 2-like"/>
    <property type="match status" value="2"/>
</dbReference>
<dbReference type="PROSITE" id="PS00954">
    <property type="entry name" value="IGP_DEHYDRATASE_1"/>
    <property type="match status" value="1"/>
</dbReference>
<dbReference type="PROSITE" id="PS00955">
    <property type="entry name" value="IGP_DEHYDRATASE_2"/>
    <property type="match status" value="1"/>
</dbReference>
<sequence length="192" mass="21600">MIFQKKRKTAETELSIILADDKRTSEINTGVGFLNHMLTLFTFHSGLSIIIEANGDTEVDDHHVTEDIGIVLGQLLLDMIRERKSFQRYGVSYIPMDETLSRAVVDISGRPYLSFNATLSKEKVGTFDSELVEEFFRALIINARLTTHIDLLRGGNTHHEIEAIFKSFARALKMALSENDNDNIPSSKGVIE</sequence>
<accession>Q4A046</accession>
<keyword id="KW-0028">Amino-acid biosynthesis</keyword>
<keyword id="KW-0963">Cytoplasm</keyword>
<keyword id="KW-0368">Histidine biosynthesis</keyword>
<keyword id="KW-0456">Lyase</keyword>
<keyword id="KW-1185">Reference proteome</keyword>
<evidence type="ECO:0000255" key="1">
    <source>
        <dbReference type="HAMAP-Rule" id="MF_00076"/>
    </source>
</evidence>
<comment type="catalytic activity">
    <reaction evidence="1">
        <text>D-erythro-1-(imidazol-4-yl)glycerol 3-phosphate = 3-(imidazol-4-yl)-2-oxopropyl phosphate + H2O</text>
        <dbReference type="Rhea" id="RHEA:11040"/>
        <dbReference type="ChEBI" id="CHEBI:15377"/>
        <dbReference type="ChEBI" id="CHEBI:57766"/>
        <dbReference type="ChEBI" id="CHEBI:58278"/>
        <dbReference type="EC" id="4.2.1.19"/>
    </reaction>
</comment>
<comment type="pathway">
    <text evidence="1">Amino-acid biosynthesis; L-histidine biosynthesis; L-histidine from 5-phospho-alpha-D-ribose 1-diphosphate: step 6/9.</text>
</comment>
<comment type="subcellular location">
    <subcellularLocation>
        <location evidence="1">Cytoplasm</location>
    </subcellularLocation>
</comment>
<comment type="similarity">
    <text evidence="1">Belongs to the imidazoleglycerol-phosphate dehydratase family.</text>
</comment>
<protein>
    <recommendedName>
        <fullName evidence="1">Imidazoleglycerol-phosphate dehydratase</fullName>
        <shortName evidence="1">IGPD</shortName>
        <ecNumber evidence="1">4.2.1.19</ecNumber>
    </recommendedName>
</protein>
<organism>
    <name type="scientific">Staphylococcus saprophyticus subsp. saprophyticus (strain ATCC 15305 / DSM 20229 / NCIMB 8711 / NCTC 7292 / S-41)</name>
    <dbReference type="NCBI Taxonomy" id="342451"/>
    <lineage>
        <taxon>Bacteria</taxon>
        <taxon>Bacillati</taxon>
        <taxon>Bacillota</taxon>
        <taxon>Bacilli</taxon>
        <taxon>Bacillales</taxon>
        <taxon>Staphylococcaceae</taxon>
        <taxon>Staphylococcus</taxon>
    </lineage>
</organism>
<proteinExistence type="inferred from homology"/>
<reference key="1">
    <citation type="journal article" date="2005" name="Proc. Natl. Acad. Sci. U.S.A.">
        <title>Whole genome sequence of Staphylococcus saprophyticus reveals the pathogenesis of uncomplicated urinary tract infection.</title>
        <authorList>
            <person name="Kuroda M."/>
            <person name="Yamashita A."/>
            <person name="Hirakawa H."/>
            <person name="Kumano M."/>
            <person name="Morikawa K."/>
            <person name="Higashide M."/>
            <person name="Maruyama A."/>
            <person name="Inose Y."/>
            <person name="Matoba K."/>
            <person name="Toh H."/>
            <person name="Kuhara S."/>
            <person name="Hattori M."/>
            <person name="Ohta T."/>
        </authorList>
    </citation>
    <scope>NUCLEOTIDE SEQUENCE [LARGE SCALE GENOMIC DNA]</scope>
    <source>
        <strain>ATCC 15305 / DSM 20229 / NCIMB 8711 / NCTC 7292 / S-41</strain>
    </source>
</reference>